<dbReference type="EC" id="4.6.1.12" evidence="1"/>
<dbReference type="EMBL" id="AE017194">
    <property type="protein sequence ID" value="AAS39022.1"/>
    <property type="molecule type" value="Genomic_DNA"/>
</dbReference>
<dbReference type="SMR" id="Q73FC0"/>
<dbReference type="KEGG" id="bca:BCE_0086"/>
<dbReference type="HOGENOM" id="CLU_084630_2_0_9"/>
<dbReference type="UniPathway" id="UPA00056">
    <property type="reaction ID" value="UER00095"/>
</dbReference>
<dbReference type="Proteomes" id="UP000002527">
    <property type="component" value="Chromosome"/>
</dbReference>
<dbReference type="GO" id="GO:0008685">
    <property type="term" value="F:2-C-methyl-D-erythritol 2,4-cyclodiphosphate synthase activity"/>
    <property type="evidence" value="ECO:0007669"/>
    <property type="project" value="UniProtKB-UniRule"/>
</dbReference>
<dbReference type="GO" id="GO:0046872">
    <property type="term" value="F:metal ion binding"/>
    <property type="evidence" value="ECO:0007669"/>
    <property type="project" value="UniProtKB-KW"/>
</dbReference>
<dbReference type="GO" id="GO:0019288">
    <property type="term" value="P:isopentenyl diphosphate biosynthetic process, methylerythritol 4-phosphate pathway"/>
    <property type="evidence" value="ECO:0007669"/>
    <property type="project" value="UniProtKB-UniRule"/>
</dbReference>
<dbReference type="GO" id="GO:0016114">
    <property type="term" value="P:terpenoid biosynthetic process"/>
    <property type="evidence" value="ECO:0007669"/>
    <property type="project" value="InterPro"/>
</dbReference>
<dbReference type="CDD" id="cd00554">
    <property type="entry name" value="MECDP_synthase"/>
    <property type="match status" value="1"/>
</dbReference>
<dbReference type="FunFam" id="3.30.1330.50:FF:000001">
    <property type="entry name" value="2-C-methyl-D-erythritol 2,4-cyclodiphosphate synthase"/>
    <property type="match status" value="1"/>
</dbReference>
<dbReference type="Gene3D" id="3.30.1330.50">
    <property type="entry name" value="2-C-methyl-D-erythritol 2,4-cyclodiphosphate synthase"/>
    <property type="match status" value="1"/>
</dbReference>
<dbReference type="HAMAP" id="MF_00107">
    <property type="entry name" value="IspF"/>
    <property type="match status" value="1"/>
</dbReference>
<dbReference type="InterPro" id="IPR003526">
    <property type="entry name" value="MECDP_synthase"/>
</dbReference>
<dbReference type="InterPro" id="IPR020555">
    <property type="entry name" value="MECDP_synthase_CS"/>
</dbReference>
<dbReference type="InterPro" id="IPR036571">
    <property type="entry name" value="MECDP_synthase_sf"/>
</dbReference>
<dbReference type="NCBIfam" id="TIGR00151">
    <property type="entry name" value="ispF"/>
    <property type="match status" value="1"/>
</dbReference>
<dbReference type="PANTHER" id="PTHR43181">
    <property type="entry name" value="2-C-METHYL-D-ERYTHRITOL 2,4-CYCLODIPHOSPHATE SYNTHASE, CHLOROPLASTIC"/>
    <property type="match status" value="1"/>
</dbReference>
<dbReference type="PANTHER" id="PTHR43181:SF1">
    <property type="entry name" value="2-C-METHYL-D-ERYTHRITOL 2,4-CYCLODIPHOSPHATE SYNTHASE, CHLOROPLASTIC"/>
    <property type="match status" value="1"/>
</dbReference>
<dbReference type="Pfam" id="PF02542">
    <property type="entry name" value="YgbB"/>
    <property type="match status" value="1"/>
</dbReference>
<dbReference type="SUPFAM" id="SSF69765">
    <property type="entry name" value="IpsF-like"/>
    <property type="match status" value="1"/>
</dbReference>
<dbReference type="PROSITE" id="PS01350">
    <property type="entry name" value="ISPF"/>
    <property type="match status" value="1"/>
</dbReference>
<proteinExistence type="inferred from homology"/>
<evidence type="ECO:0000255" key="1">
    <source>
        <dbReference type="HAMAP-Rule" id="MF_00107"/>
    </source>
</evidence>
<protein>
    <recommendedName>
        <fullName evidence="1">2-C-methyl-D-erythritol 2,4-cyclodiphosphate synthase</fullName>
        <shortName evidence="1">MECDP-synthase</shortName>
        <shortName evidence="1">MECPP-synthase</shortName>
        <shortName evidence="1">MECPS</shortName>
        <ecNumber evidence="1">4.6.1.12</ecNumber>
    </recommendedName>
</protein>
<comment type="function">
    <text evidence="1">Involved in the biosynthesis of isopentenyl diphosphate (IPP) and dimethylallyl diphosphate (DMAPP), two major building blocks of isoprenoid compounds. Catalyzes the conversion of 4-diphosphocytidyl-2-C-methyl-D-erythritol 2-phosphate (CDP-ME2P) to 2-C-methyl-D-erythritol 2,4-cyclodiphosphate (ME-CPP) with a corresponding release of cytidine 5-monophosphate (CMP).</text>
</comment>
<comment type="catalytic activity">
    <reaction evidence="1">
        <text>4-CDP-2-C-methyl-D-erythritol 2-phosphate = 2-C-methyl-D-erythritol 2,4-cyclic diphosphate + CMP</text>
        <dbReference type="Rhea" id="RHEA:23864"/>
        <dbReference type="ChEBI" id="CHEBI:57919"/>
        <dbReference type="ChEBI" id="CHEBI:58483"/>
        <dbReference type="ChEBI" id="CHEBI:60377"/>
        <dbReference type="EC" id="4.6.1.12"/>
    </reaction>
</comment>
<comment type="cofactor">
    <cofactor evidence="1">
        <name>a divalent metal cation</name>
        <dbReference type="ChEBI" id="CHEBI:60240"/>
    </cofactor>
    <text evidence="1">Binds 1 divalent metal cation per subunit.</text>
</comment>
<comment type="pathway">
    <text evidence="1">Isoprenoid biosynthesis; isopentenyl diphosphate biosynthesis via DXP pathway; isopentenyl diphosphate from 1-deoxy-D-xylulose 5-phosphate: step 4/6.</text>
</comment>
<comment type="subunit">
    <text evidence="1">Homotrimer.</text>
</comment>
<comment type="similarity">
    <text evidence="1">Belongs to the IspF family.</text>
</comment>
<reference key="1">
    <citation type="journal article" date="2004" name="Nucleic Acids Res.">
        <title>The genome sequence of Bacillus cereus ATCC 10987 reveals metabolic adaptations and a large plasmid related to Bacillus anthracis pXO1.</title>
        <authorList>
            <person name="Rasko D.A."/>
            <person name="Ravel J."/>
            <person name="Oekstad O.A."/>
            <person name="Helgason E."/>
            <person name="Cer R.Z."/>
            <person name="Jiang L."/>
            <person name="Shores K.A."/>
            <person name="Fouts D.E."/>
            <person name="Tourasse N.J."/>
            <person name="Angiuoli S.V."/>
            <person name="Kolonay J.F."/>
            <person name="Nelson W.C."/>
            <person name="Kolstoe A.-B."/>
            <person name="Fraser C.M."/>
            <person name="Read T.D."/>
        </authorList>
    </citation>
    <scope>NUCLEOTIDE SEQUENCE [LARGE SCALE GENOMIC DNA]</scope>
    <source>
        <strain>ATCC 10987 / NRS 248</strain>
    </source>
</reference>
<organism>
    <name type="scientific">Bacillus cereus (strain ATCC 10987 / NRS 248)</name>
    <dbReference type="NCBI Taxonomy" id="222523"/>
    <lineage>
        <taxon>Bacteria</taxon>
        <taxon>Bacillati</taxon>
        <taxon>Bacillota</taxon>
        <taxon>Bacilli</taxon>
        <taxon>Bacillales</taxon>
        <taxon>Bacillaceae</taxon>
        <taxon>Bacillus</taxon>
        <taxon>Bacillus cereus group</taxon>
    </lineage>
</organism>
<keyword id="KW-0414">Isoprene biosynthesis</keyword>
<keyword id="KW-0456">Lyase</keyword>
<keyword id="KW-0479">Metal-binding</keyword>
<accession>Q73FC0</accession>
<name>ISPF_BACC1</name>
<sequence>MFRIGQGFDVHEFAEGRPLIIGGVTIPHEKGLIGHSDADVLLHTIADACLGAIAAGDIGKHFPDTDPAFKDADSAVLLQKVWEFVREQGYELGNLDCTIIAQKPKMAPHIESMRKRISELLETSIDNINVKATTTEKLGFTGREEGIASQAVVLLQKK</sequence>
<gene>
    <name evidence="1" type="primary">ispF</name>
    <name type="ordered locus">BCE_0086</name>
</gene>
<feature type="chain" id="PRO_0000189434" description="2-C-methyl-D-erythritol 2,4-cyclodiphosphate synthase">
    <location>
        <begin position="1"/>
        <end position="158"/>
    </location>
</feature>
<feature type="binding site" evidence="1">
    <location>
        <begin position="9"/>
        <end position="11"/>
    </location>
    <ligand>
        <name>4-CDP-2-C-methyl-D-erythritol 2-phosphate</name>
        <dbReference type="ChEBI" id="CHEBI:57919"/>
    </ligand>
</feature>
<feature type="binding site" evidence="1">
    <location>
        <position position="9"/>
    </location>
    <ligand>
        <name>a divalent metal cation</name>
        <dbReference type="ChEBI" id="CHEBI:60240"/>
    </ligand>
</feature>
<feature type="binding site" evidence="1">
    <location>
        <position position="11"/>
    </location>
    <ligand>
        <name>a divalent metal cation</name>
        <dbReference type="ChEBI" id="CHEBI:60240"/>
    </ligand>
</feature>
<feature type="binding site" evidence="1">
    <location>
        <begin position="35"/>
        <end position="36"/>
    </location>
    <ligand>
        <name>4-CDP-2-C-methyl-D-erythritol 2-phosphate</name>
        <dbReference type="ChEBI" id="CHEBI:57919"/>
    </ligand>
</feature>
<feature type="binding site" evidence="1">
    <location>
        <position position="43"/>
    </location>
    <ligand>
        <name>a divalent metal cation</name>
        <dbReference type="ChEBI" id="CHEBI:60240"/>
    </ligand>
</feature>
<feature type="binding site" evidence="1">
    <location>
        <begin position="57"/>
        <end position="59"/>
    </location>
    <ligand>
        <name>4-CDP-2-C-methyl-D-erythritol 2-phosphate</name>
        <dbReference type="ChEBI" id="CHEBI:57919"/>
    </ligand>
</feature>
<feature type="binding site" evidence="1">
    <location>
        <begin position="62"/>
        <end position="66"/>
    </location>
    <ligand>
        <name>4-CDP-2-C-methyl-D-erythritol 2-phosphate</name>
        <dbReference type="ChEBI" id="CHEBI:57919"/>
    </ligand>
</feature>
<feature type="binding site" evidence="1">
    <location>
        <begin position="101"/>
        <end position="107"/>
    </location>
    <ligand>
        <name>4-CDP-2-C-methyl-D-erythritol 2-phosphate</name>
        <dbReference type="ChEBI" id="CHEBI:57919"/>
    </ligand>
</feature>
<feature type="binding site" evidence="1">
    <location>
        <begin position="133"/>
        <end position="136"/>
    </location>
    <ligand>
        <name>4-CDP-2-C-methyl-D-erythritol 2-phosphate</name>
        <dbReference type="ChEBI" id="CHEBI:57919"/>
    </ligand>
</feature>
<feature type="binding site" evidence="1">
    <location>
        <position position="140"/>
    </location>
    <ligand>
        <name>4-CDP-2-C-methyl-D-erythritol 2-phosphate</name>
        <dbReference type="ChEBI" id="CHEBI:57919"/>
    </ligand>
</feature>
<feature type="binding site" evidence="1">
    <location>
        <position position="143"/>
    </location>
    <ligand>
        <name>4-CDP-2-C-methyl-D-erythritol 2-phosphate</name>
        <dbReference type="ChEBI" id="CHEBI:57919"/>
    </ligand>
</feature>
<feature type="site" description="Transition state stabilizer" evidence="1">
    <location>
        <position position="35"/>
    </location>
</feature>
<feature type="site" description="Transition state stabilizer" evidence="1">
    <location>
        <position position="134"/>
    </location>
</feature>